<organism>
    <name type="scientific">Phytoplasma australiense</name>
    <dbReference type="NCBI Taxonomy" id="59748"/>
    <lineage>
        <taxon>Bacteria</taxon>
        <taxon>Bacillati</taxon>
        <taxon>Mycoplasmatota</taxon>
        <taxon>Mollicutes</taxon>
        <taxon>Acholeplasmatales</taxon>
        <taxon>Acholeplasmataceae</taxon>
        <taxon>Candidatus Phytoplasma</taxon>
        <taxon>16SrXII (Stolbur group)</taxon>
    </lineage>
</organism>
<protein>
    <recommendedName>
        <fullName evidence="1">Ribosomal RNA small subunit methyltransferase A</fullName>
        <ecNumber evidence="1">2.1.1.182</ecNumber>
    </recommendedName>
    <alternativeName>
        <fullName evidence="1">16S rRNA (adenine(1518)-N(6)/adenine(1519)-N(6))-dimethyltransferase</fullName>
    </alternativeName>
    <alternativeName>
        <fullName evidence="1">16S rRNA dimethyladenosine transferase</fullName>
    </alternativeName>
    <alternativeName>
        <fullName evidence="1">16S rRNA dimethylase</fullName>
    </alternativeName>
    <alternativeName>
        <fullName evidence="1">S-adenosylmethionine-6-N', N'-adenosyl(rRNA) dimethyltransferase</fullName>
    </alternativeName>
</protein>
<name>RSMA_PHYAS</name>
<comment type="function">
    <text evidence="1">Specifically dimethylates two adjacent adenosines (A1518 and A1519) in the loop of a conserved hairpin near the 3'-end of 16S rRNA in the 30S particle. May play a critical role in biogenesis of 30S subunits.</text>
</comment>
<comment type="catalytic activity">
    <reaction evidence="1">
        <text>adenosine(1518)/adenosine(1519) in 16S rRNA + 4 S-adenosyl-L-methionine = N(6)-dimethyladenosine(1518)/N(6)-dimethyladenosine(1519) in 16S rRNA + 4 S-adenosyl-L-homocysteine + 4 H(+)</text>
        <dbReference type="Rhea" id="RHEA:19609"/>
        <dbReference type="Rhea" id="RHEA-COMP:10232"/>
        <dbReference type="Rhea" id="RHEA-COMP:10233"/>
        <dbReference type="ChEBI" id="CHEBI:15378"/>
        <dbReference type="ChEBI" id="CHEBI:57856"/>
        <dbReference type="ChEBI" id="CHEBI:59789"/>
        <dbReference type="ChEBI" id="CHEBI:74411"/>
        <dbReference type="ChEBI" id="CHEBI:74493"/>
        <dbReference type="EC" id="2.1.1.182"/>
    </reaction>
</comment>
<comment type="subcellular location">
    <subcellularLocation>
        <location evidence="1">Cytoplasm</location>
    </subcellularLocation>
</comment>
<comment type="similarity">
    <text evidence="1">Belongs to the class I-like SAM-binding methyltransferase superfamily. rRNA adenine N(6)-methyltransferase family. RsmA subfamily.</text>
</comment>
<reference key="1">
    <citation type="journal article" date="2008" name="J. Bacteriol.">
        <title>Comparative genome analysis of 'Candidatus Phytoplasma australiense' (subgroup tuf-Australia I; rp-A) and 'Ca. Phytoplasma asteris' strains OY-M and AY-WB.</title>
        <authorList>
            <person name="Tran-Nguyen L.T."/>
            <person name="Kube M."/>
            <person name="Schneider B."/>
            <person name="Reinhardt R."/>
            <person name="Gibb K.S."/>
        </authorList>
    </citation>
    <scope>NUCLEOTIDE SEQUENCE [LARGE SCALE GENOMIC DNA]</scope>
</reference>
<proteinExistence type="inferred from homology"/>
<feature type="chain" id="PRO_1000130304" description="Ribosomal RNA small subunit methyltransferase A">
    <location>
        <begin position="1"/>
        <end position="284"/>
    </location>
</feature>
<feature type="binding site" evidence="1">
    <location>
        <position position="12"/>
    </location>
    <ligand>
        <name>S-adenosyl-L-methionine</name>
        <dbReference type="ChEBI" id="CHEBI:59789"/>
    </ligand>
</feature>
<feature type="binding site" evidence="1">
    <location>
        <position position="14"/>
    </location>
    <ligand>
        <name>S-adenosyl-L-methionine</name>
        <dbReference type="ChEBI" id="CHEBI:59789"/>
    </ligand>
</feature>
<feature type="binding site" evidence="1">
    <location>
        <position position="38"/>
    </location>
    <ligand>
        <name>S-adenosyl-L-methionine</name>
        <dbReference type="ChEBI" id="CHEBI:59789"/>
    </ligand>
</feature>
<feature type="binding site" evidence="1">
    <location>
        <position position="59"/>
    </location>
    <ligand>
        <name>S-adenosyl-L-methionine</name>
        <dbReference type="ChEBI" id="CHEBI:59789"/>
    </ligand>
</feature>
<feature type="binding site" evidence="1">
    <location>
        <position position="81"/>
    </location>
    <ligand>
        <name>S-adenosyl-L-methionine</name>
        <dbReference type="ChEBI" id="CHEBI:59789"/>
    </ligand>
</feature>
<feature type="binding site" evidence="1">
    <location>
        <position position="106"/>
    </location>
    <ligand>
        <name>S-adenosyl-L-methionine</name>
        <dbReference type="ChEBI" id="CHEBI:59789"/>
    </ligand>
</feature>
<dbReference type="EC" id="2.1.1.182" evidence="1"/>
<dbReference type="EMBL" id="AM422018">
    <property type="protein sequence ID" value="CAM11607.1"/>
    <property type="molecule type" value="Genomic_DNA"/>
</dbReference>
<dbReference type="SMR" id="B1V9I5"/>
<dbReference type="STRING" id="59748.PA0272"/>
<dbReference type="KEGG" id="pal:PA0272"/>
<dbReference type="eggNOG" id="COG0030">
    <property type="taxonomic scope" value="Bacteria"/>
</dbReference>
<dbReference type="Proteomes" id="UP000008323">
    <property type="component" value="Chromosome"/>
</dbReference>
<dbReference type="GO" id="GO:0005737">
    <property type="term" value="C:cytoplasm"/>
    <property type="evidence" value="ECO:0007669"/>
    <property type="project" value="UniProtKB-SubCell"/>
</dbReference>
<dbReference type="GO" id="GO:0052908">
    <property type="term" value="F:16S rRNA (adenine(1518)-N(6)/adenine(1519)-N(6))-dimethyltransferase activity"/>
    <property type="evidence" value="ECO:0007669"/>
    <property type="project" value="UniProtKB-EC"/>
</dbReference>
<dbReference type="GO" id="GO:0003723">
    <property type="term" value="F:RNA binding"/>
    <property type="evidence" value="ECO:0007669"/>
    <property type="project" value="UniProtKB-KW"/>
</dbReference>
<dbReference type="Gene3D" id="1.10.8.100">
    <property type="entry name" value="Ribosomal RNA adenine dimethylase-like, domain 2"/>
    <property type="match status" value="1"/>
</dbReference>
<dbReference type="Gene3D" id="3.40.50.150">
    <property type="entry name" value="Vaccinia Virus protein VP39"/>
    <property type="match status" value="1"/>
</dbReference>
<dbReference type="HAMAP" id="MF_00607">
    <property type="entry name" value="16SrRNA_methyltr_A"/>
    <property type="match status" value="1"/>
</dbReference>
<dbReference type="InterPro" id="IPR001737">
    <property type="entry name" value="KsgA/Erm"/>
</dbReference>
<dbReference type="InterPro" id="IPR023165">
    <property type="entry name" value="rRNA_Ade_diMease-like_C"/>
</dbReference>
<dbReference type="InterPro" id="IPR020596">
    <property type="entry name" value="rRNA_Ade_Mease_Trfase_CS"/>
</dbReference>
<dbReference type="InterPro" id="IPR020598">
    <property type="entry name" value="rRNA_Ade_methylase_Trfase_N"/>
</dbReference>
<dbReference type="InterPro" id="IPR011530">
    <property type="entry name" value="rRNA_adenine_dimethylase"/>
</dbReference>
<dbReference type="InterPro" id="IPR029063">
    <property type="entry name" value="SAM-dependent_MTases_sf"/>
</dbReference>
<dbReference type="NCBIfam" id="TIGR00755">
    <property type="entry name" value="ksgA"/>
    <property type="match status" value="1"/>
</dbReference>
<dbReference type="PANTHER" id="PTHR11727">
    <property type="entry name" value="DIMETHYLADENOSINE TRANSFERASE"/>
    <property type="match status" value="1"/>
</dbReference>
<dbReference type="PANTHER" id="PTHR11727:SF7">
    <property type="entry name" value="DIMETHYLADENOSINE TRANSFERASE-RELATED"/>
    <property type="match status" value="1"/>
</dbReference>
<dbReference type="Pfam" id="PF00398">
    <property type="entry name" value="RrnaAD"/>
    <property type="match status" value="1"/>
</dbReference>
<dbReference type="SMART" id="SM00650">
    <property type="entry name" value="rADc"/>
    <property type="match status" value="1"/>
</dbReference>
<dbReference type="SUPFAM" id="SSF53335">
    <property type="entry name" value="S-adenosyl-L-methionine-dependent methyltransferases"/>
    <property type="match status" value="1"/>
</dbReference>
<dbReference type="PROSITE" id="PS01131">
    <property type="entry name" value="RRNA_A_DIMETH"/>
    <property type="match status" value="1"/>
</dbReference>
<dbReference type="PROSITE" id="PS51689">
    <property type="entry name" value="SAM_RNA_A_N6_MT"/>
    <property type="match status" value="1"/>
</dbReference>
<gene>
    <name evidence="1" type="primary">rsmA</name>
    <name evidence="1" type="synonym">ksgA</name>
    <name type="ordered locus">PA0272</name>
</gene>
<accession>B1V9I5</accession>
<keyword id="KW-0963">Cytoplasm</keyword>
<keyword id="KW-0489">Methyltransferase</keyword>
<keyword id="KW-1185">Reference proteome</keyword>
<keyword id="KW-0694">RNA-binding</keyword>
<keyword id="KW-0698">rRNA processing</keyword>
<keyword id="KW-0949">S-adenosyl-L-methionine</keyword>
<keyword id="KW-0808">Transferase</keyword>
<sequence length="284" mass="33072">MQHQPKKKYGQNFLKDVNLLKKIVSKANLKGKNVIEIGPGKGSLTNLITKEANLLLAYEIDPTLKPFLVFDTTKIKIIYDDFLKRDLVKDFDNYFSINCQLSLISNLPYYITTTILFKIIQTPQIVDATLMMQKEVGMRLMAQPNSKNYNALSVITQYFFNIEKIQEVKSHMFFPQPKVDSVVLKLSKHKSDFNTFSTSSQKNFITFVKAAFKQKRKTLLNNLSSVFLLPKTEIILFFEQNKLLTKIRAEEITLKEFQKISIQWFLFQNKTKESQLNNYILKKV</sequence>
<evidence type="ECO:0000255" key="1">
    <source>
        <dbReference type="HAMAP-Rule" id="MF_00607"/>
    </source>
</evidence>